<reference key="1">
    <citation type="journal article" date="2004" name="J. Mol. Microbiol. Biotechnol.">
        <title>The complete genome sequence of Bacillus licheniformis DSM13, an organism with great industrial potential.</title>
        <authorList>
            <person name="Veith B."/>
            <person name="Herzberg C."/>
            <person name="Steckel S."/>
            <person name="Feesche J."/>
            <person name="Maurer K.H."/>
            <person name="Ehrenreich P."/>
            <person name="Baeumer S."/>
            <person name="Henne A."/>
            <person name="Liesegang H."/>
            <person name="Merkl R."/>
            <person name="Ehrenreich A."/>
            <person name="Gottschalk G."/>
        </authorList>
    </citation>
    <scope>NUCLEOTIDE SEQUENCE [LARGE SCALE GENOMIC DNA]</scope>
    <source>
        <strain>ATCC 14580 / DSM 13 / JCM 2505 / CCUG 7422 / NBRC 12200 / NCIMB 9375 / NCTC 10341 / NRRL NRS-1264 / Gibson 46</strain>
    </source>
</reference>
<reference key="2">
    <citation type="journal article" date="2004" name="Genome Biol.">
        <title>Complete genome sequence of the industrial bacterium Bacillus licheniformis and comparisons with closely related Bacillus species.</title>
        <authorList>
            <person name="Rey M.W."/>
            <person name="Ramaiya P."/>
            <person name="Nelson B.A."/>
            <person name="Brody-Karpin S.D."/>
            <person name="Zaretsky E.J."/>
            <person name="Tang M."/>
            <person name="Lopez de Leon A."/>
            <person name="Xiang H."/>
            <person name="Gusti V."/>
            <person name="Clausen I.G."/>
            <person name="Olsen P.B."/>
            <person name="Rasmussen M.D."/>
            <person name="Andersen J.T."/>
            <person name="Joergensen P.L."/>
            <person name="Larsen T.S."/>
            <person name="Sorokin A."/>
            <person name="Bolotin A."/>
            <person name="Lapidus A."/>
            <person name="Galleron N."/>
            <person name="Ehrlich S.D."/>
            <person name="Berka R.M."/>
        </authorList>
    </citation>
    <scope>NUCLEOTIDE SEQUENCE [LARGE SCALE GENOMIC DNA]</scope>
    <source>
        <strain>ATCC 14580 / DSM 13 / JCM 2505 / CCUG 7422 / NBRC 12200 / NCIMB 9375 / NCTC 10341 / NRRL NRS-1264 / Gibson 46</strain>
    </source>
</reference>
<name>MDH_BACLD</name>
<feature type="chain" id="PRO_0000113432" description="Malate dehydrogenase">
    <location>
        <begin position="1"/>
        <end position="312"/>
    </location>
</feature>
<feature type="active site" description="Proton acceptor" evidence="1">
    <location>
        <position position="180"/>
    </location>
</feature>
<feature type="binding site" evidence="1">
    <location>
        <begin position="12"/>
        <end position="17"/>
    </location>
    <ligand>
        <name>NAD(+)</name>
        <dbReference type="ChEBI" id="CHEBI:57540"/>
    </ligand>
</feature>
<feature type="binding site" evidence="1">
    <location>
        <position position="36"/>
    </location>
    <ligand>
        <name>NAD(+)</name>
        <dbReference type="ChEBI" id="CHEBI:57540"/>
    </ligand>
</feature>
<feature type="binding site" evidence="1">
    <location>
        <position position="87"/>
    </location>
    <ligand>
        <name>substrate</name>
    </ligand>
</feature>
<feature type="binding site" evidence="1">
    <location>
        <position position="93"/>
    </location>
    <ligand>
        <name>substrate</name>
    </ligand>
</feature>
<feature type="binding site" evidence="1">
    <location>
        <position position="100"/>
    </location>
    <ligand>
        <name>NAD(+)</name>
        <dbReference type="ChEBI" id="CHEBI:57540"/>
    </ligand>
</feature>
<feature type="binding site" evidence="1">
    <location>
        <begin position="123"/>
        <end position="125"/>
    </location>
    <ligand>
        <name>NAD(+)</name>
        <dbReference type="ChEBI" id="CHEBI:57540"/>
    </ligand>
</feature>
<feature type="binding site" evidence="1">
    <location>
        <position position="125"/>
    </location>
    <ligand>
        <name>substrate</name>
    </ligand>
</feature>
<feature type="binding site" evidence="1">
    <location>
        <position position="156"/>
    </location>
    <ligand>
        <name>substrate</name>
    </ligand>
</feature>
<feature type="modified residue" description="Phosphoserine" evidence="1">
    <location>
        <position position="149"/>
    </location>
</feature>
<accession>Q65G89</accession>
<accession>Q62RP4</accession>
<sequence length="312" mass="33597">MGKKRNKVSVIGAGFTGATTAFLTAQKELADVVLVDIPQLENPTKGKALDMLEASPVQGFDANITGTANYEDTAGSDIVVITAGIARKPGMSRDDLVATNEKIMRSVTKEVVKYSPDCIIIVLTNPVDAMTYAVYKESGFPKERVIGQSGILDTARFRTFVAQELNLSVKDITGFVLGGHGDDMVPLVRYSYAGGIPLETLLPKDRIDAIVERTRKGGGEIVNLLGNGSAYYAPAASLTEMVEAILKDQRRVLPTIAYLEGEYGYEGIYLGVPTIIGGNGLEQIIELELTETEKSQLDKSVESVKNVMKVLS</sequence>
<keyword id="KW-0520">NAD</keyword>
<keyword id="KW-0560">Oxidoreductase</keyword>
<keyword id="KW-0597">Phosphoprotein</keyword>
<keyword id="KW-1185">Reference proteome</keyword>
<keyword id="KW-0816">Tricarboxylic acid cycle</keyword>
<gene>
    <name evidence="1" type="primary">mdh</name>
    <name type="ordered locus">BLi03060</name>
    <name type="ordered locus">BL00397</name>
</gene>
<organism>
    <name type="scientific">Bacillus licheniformis (strain ATCC 14580 / DSM 13 / JCM 2505 / CCUG 7422 / NBRC 12200 / NCIMB 9375 / NCTC 10341 / NRRL NRS-1264 / Gibson 46)</name>
    <dbReference type="NCBI Taxonomy" id="279010"/>
    <lineage>
        <taxon>Bacteria</taxon>
        <taxon>Bacillati</taxon>
        <taxon>Bacillota</taxon>
        <taxon>Bacilli</taxon>
        <taxon>Bacillales</taxon>
        <taxon>Bacillaceae</taxon>
        <taxon>Bacillus</taxon>
    </lineage>
</organism>
<proteinExistence type="inferred from homology"/>
<comment type="function">
    <text evidence="1">Catalyzes the reversible oxidation of malate to oxaloacetate.</text>
</comment>
<comment type="catalytic activity">
    <reaction evidence="1">
        <text>(S)-malate + NAD(+) = oxaloacetate + NADH + H(+)</text>
        <dbReference type="Rhea" id="RHEA:21432"/>
        <dbReference type="ChEBI" id="CHEBI:15378"/>
        <dbReference type="ChEBI" id="CHEBI:15589"/>
        <dbReference type="ChEBI" id="CHEBI:16452"/>
        <dbReference type="ChEBI" id="CHEBI:57540"/>
        <dbReference type="ChEBI" id="CHEBI:57945"/>
        <dbReference type="EC" id="1.1.1.37"/>
    </reaction>
</comment>
<comment type="similarity">
    <text evidence="1">Belongs to the LDH/MDH superfamily. MDH type 3 family.</text>
</comment>
<evidence type="ECO:0000255" key="1">
    <source>
        <dbReference type="HAMAP-Rule" id="MF_00487"/>
    </source>
</evidence>
<protein>
    <recommendedName>
        <fullName evidence="1">Malate dehydrogenase</fullName>
        <ecNumber evidence="1">1.1.1.37</ecNumber>
    </recommendedName>
</protein>
<dbReference type="EC" id="1.1.1.37" evidence="1"/>
<dbReference type="EMBL" id="AE017333">
    <property type="protein sequence ID" value="AAU41925.1"/>
    <property type="molecule type" value="Genomic_DNA"/>
</dbReference>
<dbReference type="EMBL" id="CP000002">
    <property type="protein sequence ID" value="AAU24566.1"/>
    <property type="molecule type" value="Genomic_DNA"/>
</dbReference>
<dbReference type="RefSeq" id="WP_003184317.1">
    <property type="nucleotide sequence ID" value="NC_006322.1"/>
</dbReference>
<dbReference type="SMR" id="Q65G89"/>
<dbReference type="STRING" id="279010.BL00397"/>
<dbReference type="GeneID" id="92860347"/>
<dbReference type="KEGG" id="bld:BLi03060"/>
<dbReference type="KEGG" id="bli:BL00397"/>
<dbReference type="eggNOG" id="COG0039">
    <property type="taxonomic scope" value="Bacteria"/>
</dbReference>
<dbReference type="HOGENOM" id="CLU_045401_2_1_9"/>
<dbReference type="Proteomes" id="UP000000606">
    <property type="component" value="Chromosome"/>
</dbReference>
<dbReference type="GO" id="GO:0004459">
    <property type="term" value="F:L-lactate dehydrogenase activity"/>
    <property type="evidence" value="ECO:0007669"/>
    <property type="project" value="TreeGrafter"/>
</dbReference>
<dbReference type="GO" id="GO:0030060">
    <property type="term" value="F:L-malate dehydrogenase (NAD+) activity"/>
    <property type="evidence" value="ECO:0007669"/>
    <property type="project" value="UniProtKB-UniRule"/>
</dbReference>
<dbReference type="GO" id="GO:0006089">
    <property type="term" value="P:lactate metabolic process"/>
    <property type="evidence" value="ECO:0007669"/>
    <property type="project" value="TreeGrafter"/>
</dbReference>
<dbReference type="GO" id="GO:0006099">
    <property type="term" value="P:tricarboxylic acid cycle"/>
    <property type="evidence" value="ECO:0007669"/>
    <property type="project" value="UniProtKB-UniRule"/>
</dbReference>
<dbReference type="CDD" id="cd01339">
    <property type="entry name" value="LDH-like_MDH"/>
    <property type="match status" value="1"/>
</dbReference>
<dbReference type="FunFam" id="3.40.50.720:FF:000018">
    <property type="entry name" value="Malate dehydrogenase"/>
    <property type="match status" value="1"/>
</dbReference>
<dbReference type="FunFam" id="3.90.110.10:FF:000004">
    <property type="entry name" value="Malate dehydrogenase"/>
    <property type="match status" value="1"/>
</dbReference>
<dbReference type="Gene3D" id="3.90.110.10">
    <property type="entry name" value="Lactate dehydrogenase/glycoside hydrolase, family 4, C-terminal"/>
    <property type="match status" value="1"/>
</dbReference>
<dbReference type="Gene3D" id="3.40.50.720">
    <property type="entry name" value="NAD(P)-binding Rossmann-like Domain"/>
    <property type="match status" value="1"/>
</dbReference>
<dbReference type="HAMAP" id="MF_00487">
    <property type="entry name" value="Malate_dehydrog_3"/>
    <property type="match status" value="1"/>
</dbReference>
<dbReference type="InterPro" id="IPR001557">
    <property type="entry name" value="L-lactate/malate_DH"/>
</dbReference>
<dbReference type="InterPro" id="IPR022383">
    <property type="entry name" value="Lactate/malate_DH_C"/>
</dbReference>
<dbReference type="InterPro" id="IPR001236">
    <property type="entry name" value="Lactate/malate_DH_N"/>
</dbReference>
<dbReference type="InterPro" id="IPR015955">
    <property type="entry name" value="Lactate_DH/Glyco_Ohase_4_C"/>
</dbReference>
<dbReference type="InterPro" id="IPR011275">
    <property type="entry name" value="Malate_DH_type3"/>
</dbReference>
<dbReference type="InterPro" id="IPR036291">
    <property type="entry name" value="NAD(P)-bd_dom_sf"/>
</dbReference>
<dbReference type="NCBIfam" id="TIGR01763">
    <property type="entry name" value="MalateDH_bact"/>
    <property type="match status" value="1"/>
</dbReference>
<dbReference type="NCBIfam" id="NF004863">
    <property type="entry name" value="PRK06223.1"/>
    <property type="match status" value="1"/>
</dbReference>
<dbReference type="PANTHER" id="PTHR43128">
    <property type="entry name" value="L-2-HYDROXYCARBOXYLATE DEHYDROGENASE (NAD(P)(+))"/>
    <property type="match status" value="1"/>
</dbReference>
<dbReference type="PANTHER" id="PTHR43128:SF16">
    <property type="entry name" value="L-LACTATE DEHYDROGENASE"/>
    <property type="match status" value="1"/>
</dbReference>
<dbReference type="Pfam" id="PF02866">
    <property type="entry name" value="Ldh_1_C"/>
    <property type="match status" value="1"/>
</dbReference>
<dbReference type="Pfam" id="PF00056">
    <property type="entry name" value="Ldh_1_N"/>
    <property type="match status" value="1"/>
</dbReference>
<dbReference type="PIRSF" id="PIRSF000102">
    <property type="entry name" value="Lac_mal_DH"/>
    <property type="match status" value="1"/>
</dbReference>
<dbReference type="PRINTS" id="PR00086">
    <property type="entry name" value="LLDHDRGNASE"/>
</dbReference>
<dbReference type="SUPFAM" id="SSF56327">
    <property type="entry name" value="LDH C-terminal domain-like"/>
    <property type="match status" value="1"/>
</dbReference>
<dbReference type="SUPFAM" id="SSF51735">
    <property type="entry name" value="NAD(P)-binding Rossmann-fold domains"/>
    <property type="match status" value="1"/>
</dbReference>